<accession>A7GPD9</accession>
<reference key="1">
    <citation type="journal article" date="2008" name="Chem. Biol. Interact.">
        <title>Extending the Bacillus cereus group genomics to putative food-borne pathogens of different toxicity.</title>
        <authorList>
            <person name="Lapidus A."/>
            <person name="Goltsman E."/>
            <person name="Auger S."/>
            <person name="Galleron N."/>
            <person name="Segurens B."/>
            <person name="Dossat C."/>
            <person name="Land M.L."/>
            <person name="Broussolle V."/>
            <person name="Brillard J."/>
            <person name="Guinebretiere M.-H."/>
            <person name="Sanchis V."/>
            <person name="Nguen-the C."/>
            <person name="Lereclus D."/>
            <person name="Richardson P."/>
            <person name="Wincker P."/>
            <person name="Weissenbach J."/>
            <person name="Ehrlich S.D."/>
            <person name="Sorokin A."/>
        </authorList>
    </citation>
    <scope>NUCLEOTIDE SEQUENCE [LARGE SCALE GENOMIC DNA]</scope>
    <source>
        <strain>DSM 22905 / CIP 110041 / 391-98 / NVH 391-98</strain>
    </source>
</reference>
<gene>
    <name type="ordered locus">Bcer98_1690</name>
</gene>
<proteinExistence type="inferred from homology"/>
<protein>
    <recommendedName>
        <fullName evidence="1">UPF0346 protein Bcer98_1690</fullName>
    </recommendedName>
</protein>
<name>Y1690_BACCN</name>
<sequence length="71" mass="8501">MKKTFYHYMMKHRAPLVKNEISDLAEAIYDDLSFPKQSEDYHEISSYLECSGLIESMSIFDKAWDLYLQER</sequence>
<evidence type="ECO:0000255" key="1">
    <source>
        <dbReference type="HAMAP-Rule" id="MF_01538"/>
    </source>
</evidence>
<dbReference type="EMBL" id="CP000764">
    <property type="protein sequence ID" value="ABS21997.1"/>
    <property type="molecule type" value="Genomic_DNA"/>
</dbReference>
<dbReference type="RefSeq" id="WP_012094179.1">
    <property type="nucleotide sequence ID" value="NC_009674.1"/>
</dbReference>
<dbReference type="SMR" id="A7GPD9"/>
<dbReference type="STRING" id="315749.Bcer98_1690"/>
<dbReference type="GeneID" id="33897019"/>
<dbReference type="KEGG" id="bcy:Bcer98_1690"/>
<dbReference type="eggNOG" id="COG4479">
    <property type="taxonomic scope" value="Bacteria"/>
</dbReference>
<dbReference type="HOGENOM" id="CLU_177534_0_0_9"/>
<dbReference type="OrthoDB" id="2242851at2"/>
<dbReference type="Proteomes" id="UP000002300">
    <property type="component" value="Chromosome"/>
</dbReference>
<dbReference type="Gene3D" id="1.10.150.260">
    <property type="entry name" value="YozE SAM-like"/>
    <property type="match status" value="1"/>
</dbReference>
<dbReference type="HAMAP" id="MF_01538">
    <property type="entry name" value="UPF0346"/>
    <property type="match status" value="1"/>
</dbReference>
<dbReference type="InterPro" id="IPR010673">
    <property type="entry name" value="UPF0346"/>
</dbReference>
<dbReference type="InterPro" id="IPR023089">
    <property type="entry name" value="YozE_SAM-like"/>
</dbReference>
<dbReference type="InterPro" id="IPR036806">
    <property type="entry name" value="YozE_SAM-like_sf"/>
</dbReference>
<dbReference type="NCBIfam" id="NF010193">
    <property type="entry name" value="PRK13672.1"/>
    <property type="match status" value="1"/>
</dbReference>
<dbReference type="Pfam" id="PF06855">
    <property type="entry name" value="YozE_SAM_like"/>
    <property type="match status" value="1"/>
</dbReference>
<dbReference type="PIRSF" id="PIRSF037262">
    <property type="entry name" value="UCP037262"/>
    <property type="match status" value="1"/>
</dbReference>
<dbReference type="SUPFAM" id="SSF140652">
    <property type="entry name" value="YozE-like"/>
    <property type="match status" value="1"/>
</dbReference>
<comment type="similarity">
    <text evidence="1">Belongs to the UPF0346 family.</text>
</comment>
<organism>
    <name type="scientific">Bacillus cytotoxicus (strain DSM 22905 / CIP 110041 / 391-98 / NVH 391-98)</name>
    <dbReference type="NCBI Taxonomy" id="315749"/>
    <lineage>
        <taxon>Bacteria</taxon>
        <taxon>Bacillati</taxon>
        <taxon>Bacillota</taxon>
        <taxon>Bacilli</taxon>
        <taxon>Bacillales</taxon>
        <taxon>Bacillaceae</taxon>
        <taxon>Bacillus</taxon>
        <taxon>Bacillus cereus group</taxon>
    </lineage>
</organism>
<feature type="chain" id="PRO_1000087615" description="UPF0346 protein Bcer98_1690">
    <location>
        <begin position="1"/>
        <end position="71"/>
    </location>
</feature>